<keyword id="KW-0963">Cytoplasm</keyword>
<keyword id="KW-0520">NAD</keyword>
<keyword id="KW-0560">Oxidoreductase</keyword>
<comment type="function">
    <text evidence="1">Catalyzes the reduction of 2,3-diketo-L-gulonate in the presence of NADH, to form 3-keto-L-gulonate.</text>
</comment>
<comment type="catalytic activity">
    <reaction evidence="1">
        <text>3-dehydro-L-gulonate + NAD(+) = 2,3-dioxo-L-gulonate + NADH + H(+)</text>
        <dbReference type="Rhea" id="RHEA:21924"/>
        <dbReference type="ChEBI" id="CHEBI:15378"/>
        <dbReference type="ChEBI" id="CHEBI:57441"/>
        <dbReference type="ChEBI" id="CHEBI:57540"/>
        <dbReference type="ChEBI" id="CHEBI:57655"/>
        <dbReference type="ChEBI" id="CHEBI:57945"/>
        <dbReference type="EC" id="1.1.1.130"/>
    </reaction>
</comment>
<comment type="catalytic activity">
    <reaction evidence="1">
        <text>3-dehydro-L-gulonate + NADP(+) = 2,3-dioxo-L-gulonate + NADPH + H(+)</text>
        <dbReference type="Rhea" id="RHEA:21928"/>
        <dbReference type="ChEBI" id="CHEBI:15378"/>
        <dbReference type="ChEBI" id="CHEBI:57441"/>
        <dbReference type="ChEBI" id="CHEBI:57655"/>
        <dbReference type="ChEBI" id="CHEBI:57783"/>
        <dbReference type="ChEBI" id="CHEBI:58349"/>
        <dbReference type="EC" id="1.1.1.130"/>
    </reaction>
</comment>
<comment type="subunit">
    <text evidence="1">Homodimer.</text>
</comment>
<comment type="subcellular location">
    <subcellularLocation>
        <location evidence="1">Cytoplasm</location>
    </subcellularLocation>
</comment>
<comment type="similarity">
    <text evidence="1">Belongs to the LDH2/MDH2 oxidoreductase family. DlgD subfamily.</text>
</comment>
<proteinExistence type="inferred from homology"/>
<gene>
    <name evidence="1" type="primary">dlgD</name>
    <name type="ordered locus">ECED1_4263</name>
</gene>
<name>DLGD_ECO81</name>
<accession>B7N223</accession>
<protein>
    <recommendedName>
        <fullName evidence="1">2,3-diketo-L-gulonate reductase</fullName>
        <shortName evidence="1">2,3-DKG reductase</shortName>
        <ecNumber evidence="1">1.1.1.130</ecNumber>
    </recommendedName>
    <alternativeName>
        <fullName evidence="1">3-dehydro-L-gulonate 2-dehydrogenase</fullName>
    </alternativeName>
</protein>
<sequence length="332" mass="36574">MKVTFEQLKAAFNRVLISRGVDSETADACAEMFARTTESGVYSHGVNRFPRFIQQLENGDIIPDAQPKRITSLGAIEQWDAQRSIGNLTAKKMMDRAIELAADHGIGLVALRNANHWMRGGSYGWQAAEKGYIGICWTNSIAVMPPWGAKECRIGTNPLIVAIPSTPITMVDMSMSMFSYGMLEVNRLAGRQLPVDGGFDDEGNLTKEPGVIEKNRRILPMGYWKGSGMSIVLDMIATLLSDGASVAEVTEDNSDEYGISQIFIAIEVDKLIDGPTRDAKLQRIMDYVTSAERADENQAIRLPGHEFTTLLAENRRNGITVDDSVWAKIQAL</sequence>
<evidence type="ECO:0000255" key="1">
    <source>
        <dbReference type="HAMAP-Rule" id="MF_00820"/>
    </source>
</evidence>
<reference key="1">
    <citation type="journal article" date="2009" name="PLoS Genet.">
        <title>Organised genome dynamics in the Escherichia coli species results in highly diverse adaptive paths.</title>
        <authorList>
            <person name="Touchon M."/>
            <person name="Hoede C."/>
            <person name="Tenaillon O."/>
            <person name="Barbe V."/>
            <person name="Baeriswyl S."/>
            <person name="Bidet P."/>
            <person name="Bingen E."/>
            <person name="Bonacorsi S."/>
            <person name="Bouchier C."/>
            <person name="Bouvet O."/>
            <person name="Calteau A."/>
            <person name="Chiapello H."/>
            <person name="Clermont O."/>
            <person name="Cruveiller S."/>
            <person name="Danchin A."/>
            <person name="Diard M."/>
            <person name="Dossat C."/>
            <person name="Karoui M.E."/>
            <person name="Frapy E."/>
            <person name="Garry L."/>
            <person name="Ghigo J.M."/>
            <person name="Gilles A.M."/>
            <person name="Johnson J."/>
            <person name="Le Bouguenec C."/>
            <person name="Lescat M."/>
            <person name="Mangenot S."/>
            <person name="Martinez-Jehanne V."/>
            <person name="Matic I."/>
            <person name="Nassif X."/>
            <person name="Oztas S."/>
            <person name="Petit M.A."/>
            <person name="Pichon C."/>
            <person name="Rouy Z."/>
            <person name="Ruf C.S."/>
            <person name="Schneider D."/>
            <person name="Tourret J."/>
            <person name="Vacherie B."/>
            <person name="Vallenet D."/>
            <person name="Medigue C."/>
            <person name="Rocha E.P.C."/>
            <person name="Denamur E."/>
        </authorList>
    </citation>
    <scope>NUCLEOTIDE SEQUENCE [LARGE SCALE GENOMIC DNA]</scope>
    <source>
        <strain>ED1a</strain>
    </source>
</reference>
<feature type="chain" id="PRO_1000148690" description="2,3-diketo-L-gulonate reductase">
    <location>
        <begin position="1"/>
        <end position="332"/>
    </location>
</feature>
<feature type="active site" description="Proton donor" evidence="1">
    <location>
        <position position="44"/>
    </location>
</feature>
<feature type="binding site" evidence="1">
    <location>
        <begin position="168"/>
        <end position="174"/>
    </location>
    <ligand>
        <name>NAD(+)</name>
        <dbReference type="ChEBI" id="CHEBI:57540"/>
    </ligand>
</feature>
<feature type="binding site" evidence="1">
    <location>
        <begin position="224"/>
        <end position="225"/>
    </location>
    <ligand>
        <name>NAD(+)</name>
        <dbReference type="ChEBI" id="CHEBI:57540"/>
    </ligand>
</feature>
<feature type="binding site" evidence="1">
    <location>
        <begin position="304"/>
        <end position="306"/>
    </location>
    <ligand>
        <name>NAD(+)</name>
        <dbReference type="ChEBI" id="CHEBI:57540"/>
    </ligand>
</feature>
<organism>
    <name type="scientific">Escherichia coli O81 (strain ED1a)</name>
    <dbReference type="NCBI Taxonomy" id="585397"/>
    <lineage>
        <taxon>Bacteria</taxon>
        <taxon>Pseudomonadati</taxon>
        <taxon>Pseudomonadota</taxon>
        <taxon>Gammaproteobacteria</taxon>
        <taxon>Enterobacterales</taxon>
        <taxon>Enterobacteriaceae</taxon>
        <taxon>Escherichia</taxon>
    </lineage>
</organism>
<dbReference type="EC" id="1.1.1.130" evidence="1"/>
<dbReference type="EMBL" id="CU928162">
    <property type="protein sequence ID" value="CAR10394.2"/>
    <property type="molecule type" value="Genomic_DNA"/>
</dbReference>
<dbReference type="SMR" id="B7N223"/>
<dbReference type="KEGG" id="ecq:ECED1_4263"/>
<dbReference type="HOGENOM" id="CLU_040452_4_0_6"/>
<dbReference type="Proteomes" id="UP000000748">
    <property type="component" value="Chromosome"/>
</dbReference>
<dbReference type="GO" id="GO:0005737">
    <property type="term" value="C:cytoplasm"/>
    <property type="evidence" value="ECO:0007669"/>
    <property type="project" value="UniProtKB-SubCell"/>
</dbReference>
<dbReference type="GO" id="GO:0047559">
    <property type="term" value="F:3-dehydro-L-gulonate 2-dehydrogenase activity"/>
    <property type="evidence" value="ECO:0007669"/>
    <property type="project" value="UniProtKB-UniRule"/>
</dbReference>
<dbReference type="GO" id="GO:0070403">
    <property type="term" value="F:NAD+ binding"/>
    <property type="evidence" value="ECO:0007669"/>
    <property type="project" value="InterPro"/>
</dbReference>
<dbReference type="FunFam" id="1.10.1530.10:FF:000001">
    <property type="entry name" value="2,3-diketo-L-gulonate reductase"/>
    <property type="match status" value="1"/>
</dbReference>
<dbReference type="Gene3D" id="1.10.1530.10">
    <property type="match status" value="1"/>
</dbReference>
<dbReference type="Gene3D" id="3.30.1370.60">
    <property type="entry name" value="Hypothetical oxidoreductase yiak, domain 2"/>
    <property type="match status" value="1"/>
</dbReference>
<dbReference type="Gene3D" id="3.30.60.50">
    <property type="entry name" value="Hypothetical oxidoreductase yiak, domain 3"/>
    <property type="match status" value="1"/>
</dbReference>
<dbReference type="HAMAP" id="MF_00820">
    <property type="entry name" value="Diketo_gul_reduc"/>
    <property type="match status" value="1"/>
</dbReference>
<dbReference type="InterPro" id="IPR023689">
    <property type="entry name" value="Diketo_gul_Rdtase"/>
</dbReference>
<dbReference type="InterPro" id="IPR043144">
    <property type="entry name" value="Mal/L-sulf/L-lact_DH-like_ah"/>
</dbReference>
<dbReference type="InterPro" id="IPR043143">
    <property type="entry name" value="Mal/L-sulf/L-lact_DH-like_NADP"/>
</dbReference>
<dbReference type="InterPro" id="IPR036111">
    <property type="entry name" value="Mal/L-sulfo/L-lacto_DH-like_sf"/>
</dbReference>
<dbReference type="InterPro" id="IPR003767">
    <property type="entry name" value="Malate/L-lactate_DH-like"/>
</dbReference>
<dbReference type="NCBIfam" id="NF009750">
    <property type="entry name" value="PRK13260.1"/>
    <property type="match status" value="1"/>
</dbReference>
<dbReference type="PANTHER" id="PTHR11091:SF3">
    <property type="entry name" value="2,3-DIKETO-L-GULONATE REDUCTASE"/>
    <property type="match status" value="1"/>
</dbReference>
<dbReference type="PANTHER" id="PTHR11091">
    <property type="entry name" value="OXIDOREDUCTASE-RELATED"/>
    <property type="match status" value="1"/>
</dbReference>
<dbReference type="Pfam" id="PF02615">
    <property type="entry name" value="Ldh_2"/>
    <property type="match status" value="1"/>
</dbReference>
<dbReference type="SUPFAM" id="SSF89733">
    <property type="entry name" value="L-sulfolactate dehydrogenase-like"/>
    <property type="match status" value="1"/>
</dbReference>